<organism>
    <name type="scientific">Simian immunodeficiency virus agm.grivet (isolate AGM gr-1)</name>
    <name type="common">SIV-agm.gri</name>
    <name type="synonym">Simian immunodeficiency virus African green monkey grivet</name>
    <dbReference type="NCBI Taxonomy" id="31684"/>
    <lineage>
        <taxon>Viruses</taxon>
        <taxon>Riboviria</taxon>
        <taxon>Pararnavirae</taxon>
        <taxon>Artverviricota</taxon>
        <taxon>Revtraviricetes</taxon>
        <taxon>Ortervirales</taxon>
        <taxon>Retroviridae</taxon>
        <taxon>Orthoretrovirinae</taxon>
        <taxon>Lentivirus</taxon>
        <taxon>Simian immunodeficiency virus</taxon>
    </lineage>
</organism>
<reference key="1">
    <citation type="journal article" date="1991" name="Virology">
        <title>A highly divergent proviral DNA clone of SIV from a distinct species of African green monkey.</title>
        <authorList>
            <person name="Fomsgaard A."/>
            <person name="Hirsch V.M."/>
            <person name="Allan J.S."/>
            <person name="Johnson P.R."/>
        </authorList>
    </citation>
    <scope>NUCLEOTIDE SEQUENCE [GENOMIC DNA]</scope>
</reference>
<protein>
    <recommendedName>
        <fullName>Protein Nef</fullName>
    </recommendedName>
    <alternativeName>
        <fullName>3'ORF</fullName>
    </alternativeName>
    <alternativeName>
        <fullName>Negative factor</fullName>
        <shortName>F-protein</shortName>
    </alternativeName>
</protein>
<name>NEF_SIVG1</name>
<proteinExistence type="inferred from homology"/>
<sequence>MGSSNSKRQQQGLLKLWRGLRGKPGADWVLLSDPLIGQSSTVQEECGKALKKSWGKGKMTPDGRRLQEGDTFDEWDDDEEEVGFPVQPRVPLRQMTYKLAVDFSHFLKSKGGLDGIYYSERREKILNLYALNEWGIIDDWQAYSPGPGIRYPRVFGFCFKLVPVDLHEEARNCERHCLMHPAQMGEDPDGIDHGEVLVWKFDPKLAVEYRPDMFKDMHEHAKR</sequence>
<feature type="initiator methionine" description="Removed; by host" evidence="1">
    <location>
        <position position="1"/>
    </location>
</feature>
<feature type="chain" id="PRO_0000085241" description="Protein Nef">
    <location>
        <begin position="2"/>
        <end position="223"/>
    </location>
</feature>
<feature type="region of interest" description="Acidic">
    <location>
        <begin position="73"/>
        <end position="81"/>
    </location>
</feature>
<feature type="region of interest" description="Mediates dimerization" evidence="1">
    <location>
        <begin position="124"/>
        <end position="140"/>
    </location>
</feature>
<feature type="lipid moiety-binding region" description="N-myristoyl glycine; by host" evidence="1">
    <location>
        <position position="2"/>
    </location>
</feature>
<evidence type="ECO:0000250" key="1"/>
<evidence type="ECO:0000305" key="2"/>
<gene>
    <name type="primary">nef</name>
</gene>
<keyword id="KW-1032">Host cell membrane</keyword>
<keyword id="KW-1043">Host membrane</keyword>
<keyword id="KW-0945">Host-virus interaction</keyword>
<keyword id="KW-0449">Lipoprotein</keyword>
<keyword id="KW-0472">Membrane</keyword>
<keyword id="KW-0519">Myristate</keyword>
<keyword id="KW-0899">Viral immunoevasion</keyword>
<keyword id="KW-0843">Virulence</keyword>
<accession>Q02840</accession>
<organismHost>
    <name type="scientific">Cercopithecidae</name>
    <name type="common">Old World monkeys</name>
    <dbReference type="NCBI Taxonomy" id="9527"/>
</organismHost>
<dbReference type="EMBL" id="M66437">
    <property type="protein sequence ID" value="AAA91929.1"/>
    <property type="molecule type" value="Genomic_DNA"/>
</dbReference>
<dbReference type="EMBL" id="M58410">
    <property type="protein sequence ID" value="AAA47592.1"/>
    <property type="molecule type" value="Genomic_RNA"/>
</dbReference>
<dbReference type="RefSeq" id="NP_054373.1">
    <property type="nucleotide sequence ID" value="NC_001549.1"/>
</dbReference>
<dbReference type="SMR" id="Q02840"/>
<dbReference type="BioGRID" id="3509205">
    <property type="interactions" value="5"/>
</dbReference>
<dbReference type="IntAct" id="Q02840">
    <property type="interactions" value="3"/>
</dbReference>
<dbReference type="GeneID" id="1490008"/>
<dbReference type="KEGG" id="vg:1490008"/>
<dbReference type="Proteomes" id="UP000201112">
    <property type="component" value="Segment"/>
</dbReference>
<dbReference type="Proteomes" id="UP000257419">
    <property type="component" value="Segment"/>
</dbReference>
<dbReference type="GO" id="GO:0020002">
    <property type="term" value="C:host cell plasma membrane"/>
    <property type="evidence" value="ECO:0007669"/>
    <property type="project" value="UniProtKB-SubCell"/>
</dbReference>
<dbReference type="GO" id="GO:0016020">
    <property type="term" value="C:membrane"/>
    <property type="evidence" value="ECO:0007669"/>
    <property type="project" value="UniProtKB-KW"/>
</dbReference>
<dbReference type="GO" id="GO:0005525">
    <property type="term" value="F:GTP binding"/>
    <property type="evidence" value="ECO:0007669"/>
    <property type="project" value="InterPro"/>
</dbReference>
<dbReference type="Gene3D" id="3.30.62.10">
    <property type="entry name" value="Nef Regulatory Factor"/>
    <property type="match status" value="1"/>
</dbReference>
<dbReference type="InterPro" id="IPR027481">
    <property type="entry name" value="HIV-1_Nef_core_sf"/>
</dbReference>
<dbReference type="InterPro" id="IPR001558">
    <property type="entry name" value="HIV_Nef"/>
</dbReference>
<dbReference type="Pfam" id="PF00469">
    <property type="entry name" value="F-protein"/>
    <property type="match status" value="1"/>
</dbReference>
<dbReference type="SUPFAM" id="SSF55671">
    <property type="entry name" value="Regulatory factor Nef"/>
    <property type="match status" value="1"/>
</dbReference>
<comment type="function">
    <text evidence="1">Seems to play a role in optimizing the host cell environment for viral replication without causing cell death by apoptosis. Enhances virus infectivity and pathogenicity. Probably involved in viral immune evasion mechanisms (By similarity).</text>
</comment>
<comment type="function">
    <text evidence="1">In infected CD4(+) T-lymphocytes, down-regulates cell surface expression of CD4, CD28, CD3, and MHC-I or MHC-II molecules.</text>
</comment>
<comment type="function">
    <text evidence="1">Interferes with TCR signaling from the cell membrane. Interacts with CD247/TCRZ (TCR zeta chain) and exert potent down-regulation of cell surface TCR/CD3 complexes (By similarity).</text>
</comment>
<comment type="subunit">
    <text evidence="1">Homodimer. Interacts with host CD247/TCRZ; this interaction induces down-regulation of cell surface TCR/CD3 complexes.</text>
</comment>
<comment type="subcellular location">
    <subcellularLocation>
        <location evidence="1">Host cell membrane</location>
        <topology evidence="1">Lipid-anchor</topology>
        <orientation evidence="1">Cytoplasmic side</orientation>
    </subcellularLocation>
    <text evidence="1">Associates with the inner plasma membrane through its N-terminal domain.</text>
</comment>
<comment type="domain">
    <text evidence="1">The N-terminal domain is composed of the N-myristoyl glycine and of a cluster of positively charged amino acids. It is required for inner plasma membrane targeting of Nef (By similarity).</text>
</comment>
<comment type="miscellaneous">
    <text>This is an African green monkey isolate.</text>
</comment>
<comment type="similarity">
    <text evidence="2">Belongs to the lentivirus primate group Nef protein family.</text>
</comment>